<proteinExistence type="evidence at protein level"/>
<organism>
    <name type="scientific">Litsea cubeba</name>
    <name type="common">Aromatic litsea</name>
    <name type="synonym">Laurus cubeba</name>
    <dbReference type="NCBI Taxonomy" id="155299"/>
    <lineage>
        <taxon>Eukaryota</taxon>
        <taxon>Viridiplantae</taxon>
        <taxon>Streptophyta</taxon>
        <taxon>Embryophyta</taxon>
        <taxon>Tracheophyta</taxon>
        <taxon>Spermatophyta</taxon>
        <taxon>Magnoliopsida</taxon>
        <taxon>Magnoliidae</taxon>
        <taxon>Laurales</taxon>
        <taxon>Lauraceae</taxon>
        <taxon>Litsea</taxon>
    </lineage>
</organism>
<dbReference type="EC" id="4.2.3.-" evidence="5"/>
<dbReference type="EC" id="4.2.3.110" evidence="5"/>
<dbReference type="EMBL" id="HQ651180">
    <property type="protein sequence ID" value="AEJ91556.1"/>
    <property type="molecule type" value="mRNA"/>
</dbReference>
<dbReference type="SMR" id="G0Y7D3"/>
<dbReference type="BRENDA" id="4.2.3.110">
    <property type="organism ID" value="12979"/>
</dbReference>
<dbReference type="UniPathway" id="UPA00213"/>
<dbReference type="GO" id="GO:0009507">
    <property type="term" value="C:chloroplast"/>
    <property type="evidence" value="ECO:0007669"/>
    <property type="project" value="UniProtKB-SubCell"/>
</dbReference>
<dbReference type="GO" id="GO:0102700">
    <property type="term" value="F:alpha-thujene synthase activity"/>
    <property type="evidence" value="ECO:0000314"/>
    <property type="project" value="UniProtKB"/>
</dbReference>
<dbReference type="GO" id="GO:0000287">
    <property type="term" value="F:magnesium ion binding"/>
    <property type="evidence" value="ECO:0007669"/>
    <property type="project" value="InterPro"/>
</dbReference>
<dbReference type="GO" id="GO:0080015">
    <property type="term" value="F:sabinene synthase activity"/>
    <property type="evidence" value="ECO:0000314"/>
    <property type="project" value="UniProtKB"/>
</dbReference>
<dbReference type="GO" id="GO:0016102">
    <property type="term" value="P:diterpenoid biosynthetic process"/>
    <property type="evidence" value="ECO:0007669"/>
    <property type="project" value="InterPro"/>
</dbReference>
<dbReference type="GO" id="GO:0010597">
    <property type="term" value="P:green leaf volatile biosynthetic process"/>
    <property type="evidence" value="ECO:0000314"/>
    <property type="project" value="UniProtKB"/>
</dbReference>
<dbReference type="GO" id="GO:0043693">
    <property type="term" value="P:monoterpene biosynthetic process"/>
    <property type="evidence" value="ECO:0000314"/>
    <property type="project" value="UniProtKB"/>
</dbReference>
<dbReference type="CDD" id="cd00684">
    <property type="entry name" value="Terpene_cyclase_plant_C1"/>
    <property type="match status" value="1"/>
</dbReference>
<dbReference type="FunFam" id="1.10.600.10:FF:000007">
    <property type="entry name" value="Isoprene synthase, chloroplastic"/>
    <property type="match status" value="1"/>
</dbReference>
<dbReference type="FunFam" id="1.50.10.130:FF:000001">
    <property type="entry name" value="Isoprene synthase, chloroplastic"/>
    <property type="match status" value="1"/>
</dbReference>
<dbReference type="Gene3D" id="1.10.600.10">
    <property type="entry name" value="Farnesyl Diphosphate Synthase"/>
    <property type="match status" value="1"/>
</dbReference>
<dbReference type="Gene3D" id="1.50.10.130">
    <property type="entry name" value="Terpene synthase, N-terminal domain"/>
    <property type="match status" value="1"/>
</dbReference>
<dbReference type="InterPro" id="IPR008949">
    <property type="entry name" value="Isoprenoid_synthase_dom_sf"/>
</dbReference>
<dbReference type="InterPro" id="IPR034741">
    <property type="entry name" value="Terpene_cyclase-like_1_C"/>
</dbReference>
<dbReference type="InterPro" id="IPR044814">
    <property type="entry name" value="Terpene_cyclase_plant_C1"/>
</dbReference>
<dbReference type="InterPro" id="IPR001906">
    <property type="entry name" value="Terpene_synth_N"/>
</dbReference>
<dbReference type="InterPro" id="IPR036965">
    <property type="entry name" value="Terpene_synth_N_sf"/>
</dbReference>
<dbReference type="InterPro" id="IPR050148">
    <property type="entry name" value="Terpene_synthase-like"/>
</dbReference>
<dbReference type="InterPro" id="IPR005630">
    <property type="entry name" value="Terpene_synthase_metal-bd"/>
</dbReference>
<dbReference type="InterPro" id="IPR008930">
    <property type="entry name" value="Terpenoid_cyclase/PrenylTrfase"/>
</dbReference>
<dbReference type="PANTHER" id="PTHR31225">
    <property type="entry name" value="OS04G0344100 PROTEIN-RELATED"/>
    <property type="match status" value="1"/>
</dbReference>
<dbReference type="PANTHER" id="PTHR31225:SF252">
    <property type="entry name" value="TERPENE SYNTHASE 12-RELATED"/>
    <property type="match status" value="1"/>
</dbReference>
<dbReference type="Pfam" id="PF01397">
    <property type="entry name" value="Terpene_synth"/>
    <property type="match status" value="1"/>
</dbReference>
<dbReference type="Pfam" id="PF03936">
    <property type="entry name" value="Terpene_synth_C"/>
    <property type="match status" value="1"/>
</dbReference>
<dbReference type="SFLD" id="SFLDS00005">
    <property type="entry name" value="Isoprenoid_Synthase_Type_I"/>
    <property type="match status" value="1"/>
</dbReference>
<dbReference type="SFLD" id="SFLDG01019">
    <property type="entry name" value="Terpene_Cyclase_Like_1_C_Termi"/>
    <property type="match status" value="1"/>
</dbReference>
<dbReference type="SFLD" id="SFLDG01014">
    <property type="entry name" value="Terpene_Cyclase_Like_1_N-term"/>
    <property type="match status" value="1"/>
</dbReference>
<dbReference type="SUPFAM" id="SSF48239">
    <property type="entry name" value="Terpenoid cyclases/Protein prenyltransferases"/>
    <property type="match status" value="1"/>
</dbReference>
<dbReference type="SUPFAM" id="SSF48576">
    <property type="entry name" value="Terpenoid synthases"/>
    <property type="match status" value="1"/>
</dbReference>
<reference key="1">
    <citation type="journal article" date="2011" name="Tree Genet. Genomes">
        <title>Molecular cloning and characterization of monoterpene synthases from Litsea cubeba (Lour.) Persoon.</title>
        <authorList>
            <person name="Chang Y.-T."/>
            <person name="Chu F.-H."/>
        </authorList>
    </citation>
    <scope>NUCLEOTIDE SEQUENCE [MRNA]</scope>
    <scope>FUNCTION</scope>
    <scope>CATALYTIC ACTIVITY</scope>
    <scope>PATHWAY</scope>
    <scope>TISSUE SPECIFICITY</scope>
</reference>
<accession>G0Y7D3</accession>
<keyword id="KW-0150">Chloroplast</keyword>
<keyword id="KW-0456">Lyase</keyword>
<keyword id="KW-0460">Magnesium</keyword>
<keyword id="KW-0479">Metal-binding</keyword>
<keyword id="KW-0934">Plastid</keyword>
<keyword id="KW-0809">Transit peptide</keyword>
<sequence length="580" mass="67406">MALQLLTPSFSFQHSPSPHRLTTLRYTHHTIRCTASAPSYSDLVGRRSANYKPSKWDSNFVETLESDYKKENHEMYIEKLMGDVKHLMKKVVNPIEKMELVDTIQRLGLGYLFNKEIKEVLNTIATSKATFKTKKDLHAVALQFRLLRQHGYEVSPDAFHKFKDEKGGFKESLCMDIKGMLSLYEASHLSFQGEVVLDEAREFTSTHLKAIEGNIDPVLLKKVRHSLEMPLHWRMLRLEARWYIETYDEEDRKNPSLAELAKHDFNSVQTIYQRSLKRMSRWWRDLGLGERLEFSRDRLVECFFWTTGVIFDPQFERCRGVLTKVNQLVSTIDDVYDVYGSLEELELFTDAVDRWDIRAMEQLPEYMKICYLALYNTTNDIAYEALKEEGLDVIPYLKKVWTDLCKSYIVEARWYSNGYKPTLEEYLENAWTSIAGPVALGHAYFSFGQKMPFEALNYSNTSSLIKWSSMIFRLCDDLATSSDEVARGDVPKSIQCYMYEAGVSESVARDHIKYLIDEAWKKMNECLVPSTPFLQPLINAGFNLARMAHCMYEHGDGHGFSNELDKKRVLLLLAEPFKFM</sequence>
<gene>
    <name evidence="6" type="primary">TPS3</name>
</gene>
<comment type="function">
    <text evidence="5">Monoterpene synthase (TPS) involved in the biosynthesis of monoterpene natural products used by traditional Chinese medicine to treat headache, inflammation and intoxication (Ref.1). Catalyzes the conversion of (2E)-geranyl diphosphate (GPP) into alpha-thujene and (1R,5R)-sabinene (Ref.1).</text>
</comment>
<comment type="catalytic activity">
    <reaction evidence="5">
        <text>(2E)-geranyl diphosphate = alpha-thujene + diphosphate</text>
        <dbReference type="Rhea" id="RHEA:68644"/>
        <dbReference type="ChEBI" id="CHEBI:33019"/>
        <dbReference type="ChEBI" id="CHEBI:50031"/>
        <dbReference type="ChEBI" id="CHEBI:58057"/>
    </reaction>
    <physiologicalReaction direction="left-to-right" evidence="5">
        <dbReference type="Rhea" id="RHEA:68645"/>
    </physiologicalReaction>
</comment>
<comment type="catalytic activity">
    <reaction evidence="5">
        <text>(2E)-geranyl diphosphate = (1R,5R)-sabinene + diphosphate</text>
        <dbReference type="Rhea" id="RHEA:32547"/>
        <dbReference type="ChEBI" id="CHEBI:33019"/>
        <dbReference type="ChEBI" id="CHEBI:50029"/>
        <dbReference type="ChEBI" id="CHEBI:58057"/>
        <dbReference type="EC" id="4.2.3.110"/>
    </reaction>
    <physiologicalReaction direction="left-to-right" evidence="5">
        <dbReference type="Rhea" id="RHEA:32548"/>
    </physiologicalReaction>
</comment>
<comment type="cofactor">
    <cofactor evidence="1">
        <name>Mg(2+)</name>
        <dbReference type="ChEBI" id="CHEBI:18420"/>
    </cofactor>
    <cofactor evidence="1">
        <name>Mn(2+)</name>
        <dbReference type="ChEBI" id="CHEBI:29035"/>
    </cofactor>
    <text evidence="1">Binds 3 Mg(2+) or Mn(2+) ions per subunit.</text>
</comment>
<comment type="pathway">
    <text evidence="5">Secondary metabolite biosynthesis; terpenoid biosynthesis.</text>
</comment>
<comment type="subunit">
    <text evidence="3">Monomer.</text>
</comment>
<comment type="subcellular location">
    <subcellularLocation>
        <location evidence="4">Plastid</location>
        <location evidence="4">Chloroplast</location>
    </subcellularLocation>
</comment>
<comment type="tissue specificity">
    <text evidence="5">Mostly expressed in developing and mature fruits, and, to a lower extent, in male leaves (Ref.1). Barely detectable in female leaves and shoots (Ref.1).</text>
</comment>
<comment type="domain">
    <text evidence="7">The Asp-Asp-Xaa-Xaa-Asp/Glu (DDXXD/E) motif is important for the catalytic activity, presumably through binding to Mg(2+).</text>
</comment>
<comment type="similarity">
    <text evidence="7">Belongs to the terpene synthase family. Tpsb subfamily.</text>
</comment>
<name>TPS3_LITCU</name>
<protein>
    <recommendedName>
        <fullName evidence="6">Alpha-thujene synthase TPS3, chloroplastic</fullName>
        <ecNumber evidence="5">4.2.3.-</ecNumber>
    </recommendedName>
    <alternativeName>
        <fullName evidence="6">(+)-sabinene synthase TPS3</fullName>
        <ecNumber evidence="5">4.2.3.110</ecNumber>
    </alternativeName>
    <alternativeName>
        <fullName evidence="6">Terpene synthase 3</fullName>
        <shortName evidence="6">LcTPS3</shortName>
    </alternativeName>
</protein>
<feature type="transit peptide" description="Chloroplast" evidence="4">
    <location>
        <begin position="1"/>
        <end position="26"/>
    </location>
</feature>
<feature type="chain" id="PRO_0000455074" description="Alpha-thujene synthase TPS3, chloroplastic">
    <location>
        <begin position="27"/>
        <end position="580"/>
    </location>
</feature>
<feature type="short sequence motif" description="DDXXD motif" evidence="7">
    <location>
        <begin position="333"/>
        <end position="337"/>
    </location>
</feature>
<feature type="binding site" evidence="2">
    <location>
        <position position="296"/>
    </location>
    <ligand>
        <name>(2E)-geranyl diphosphate</name>
        <dbReference type="ChEBI" id="CHEBI:58057"/>
    </ligand>
</feature>
<feature type="binding site" evidence="2">
    <location>
        <position position="333"/>
    </location>
    <ligand>
        <name>(2E)-geranyl diphosphate</name>
        <dbReference type="ChEBI" id="CHEBI:58057"/>
    </ligand>
</feature>
<feature type="binding site" evidence="2">
    <location>
        <position position="333"/>
    </location>
    <ligand>
        <name>Mg(2+)</name>
        <dbReference type="ChEBI" id="CHEBI:18420"/>
        <label>1</label>
    </ligand>
</feature>
<feature type="binding site" evidence="2">
    <location>
        <position position="333"/>
    </location>
    <ligand>
        <name>Mg(2+)</name>
        <dbReference type="ChEBI" id="CHEBI:18420"/>
        <label>2</label>
    </ligand>
</feature>
<feature type="binding site" evidence="2">
    <location>
        <position position="337"/>
    </location>
    <ligand>
        <name>(2E)-geranyl diphosphate</name>
        <dbReference type="ChEBI" id="CHEBI:58057"/>
    </ligand>
</feature>
<feature type="binding site" evidence="2">
    <location>
        <position position="337"/>
    </location>
    <ligand>
        <name>Mg(2+)</name>
        <dbReference type="ChEBI" id="CHEBI:18420"/>
        <label>1</label>
    </ligand>
</feature>
<feature type="binding site" evidence="2">
    <location>
        <position position="337"/>
    </location>
    <ligand>
        <name>Mg(2+)</name>
        <dbReference type="ChEBI" id="CHEBI:18420"/>
        <label>2</label>
    </ligand>
</feature>
<feature type="binding site" evidence="2">
    <location>
        <position position="473"/>
    </location>
    <ligand>
        <name>(2E)-geranyl diphosphate</name>
        <dbReference type="ChEBI" id="CHEBI:58057"/>
    </ligand>
</feature>
<feature type="binding site" evidence="2">
    <location>
        <position position="476"/>
    </location>
    <ligand>
        <name>(2E)-geranyl diphosphate</name>
        <dbReference type="ChEBI" id="CHEBI:58057"/>
    </ligand>
</feature>
<feature type="binding site" evidence="2">
    <location>
        <position position="476"/>
    </location>
    <ligand>
        <name>Mg(2+)</name>
        <dbReference type="ChEBI" id="CHEBI:18420"/>
        <label>3</label>
    </ligand>
</feature>
<feature type="binding site" evidence="2">
    <location>
        <position position="480"/>
    </location>
    <ligand>
        <name>Mg(2+)</name>
        <dbReference type="ChEBI" id="CHEBI:18420"/>
        <label>3</label>
    </ligand>
</feature>
<feature type="binding site" evidence="2">
    <location>
        <position position="484"/>
    </location>
    <ligand>
        <name>Mg(2+)</name>
        <dbReference type="ChEBI" id="CHEBI:18420"/>
        <label>3</label>
    </ligand>
</feature>
<evidence type="ECO:0000250" key="1">
    <source>
        <dbReference type="UniProtKB" id="A0A1C9J6A7"/>
    </source>
</evidence>
<evidence type="ECO:0000250" key="2">
    <source>
        <dbReference type="UniProtKB" id="Q40577"/>
    </source>
</evidence>
<evidence type="ECO:0000250" key="3">
    <source>
        <dbReference type="UniProtKB" id="Q6JD73"/>
    </source>
</evidence>
<evidence type="ECO:0000255" key="4"/>
<evidence type="ECO:0000269" key="5">
    <source ref="1"/>
</evidence>
<evidence type="ECO:0000303" key="6">
    <source ref="1"/>
</evidence>
<evidence type="ECO:0000305" key="7"/>